<dbReference type="EMBL" id="CP000560">
    <property type="protein sequence ID" value="ABS75477.1"/>
    <property type="status" value="ALT_INIT"/>
    <property type="molecule type" value="Genomic_DNA"/>
</dbReference>
<dbReference type="RefSeq" id="WP_007407375.1">
    <property type="nucleotide sequence ID" value="NC_009725.2"/>
</dbReference>
<dbReference type="GeneID" id="93082291"/>
<dbReference type="KEGG" id="bay:RBAM_031460"/>
<dbReference type="HOGENOM" id="CLU_027059_2_0_9"/>
<dbReference type="Proteomes" id="UP000001120">
    <property type="component" value="Chromosome"/>
</dbReference>
<dbReference type="GO" id="GO:0051539">
    <property type="term" value="F:4 iron, 4 sulfur cluster binding"/>
    <property type="evidence" value="ECO:0007669"/>
    <property type="project" value="UniProtKB-KW"/>
</dbReference>
<dbReference type="GO" id="GO:0046872">
    <property type="term" value="F:metal ion binding"/>
    <property type="evidence" value="ECO:0007669"/>
    <property type="project" value="UniProtKB-KW"/>
</dbReference>
<dbReference type="GO" id="GO:0006089">
    <property type="term" value="P:lactate metabolic process"/>
    <property type="evidence" value="ECO:0007669"/>
    <property type="project" value="UniProtKB-UniRule"/>
</dbReference>
<dbReference type="Gene3D" id="1.10.1060.10">
    <property type="entry name" value="Alpha-helical ferredoxin"/>
    <property type="match status" value="1"/>
</dbReference>
<dbReference type="Gene3D" id="3.40.50.10420">
    <property type="entry name" value="NagB/RpiA/CoA transferase-like"/>
    <property type="match status" value="1"/>
</dbReference>
<dbReference type="HAMAP" id="MF_02103">
    <property type="entry name" value="LutB"/>
    <property type="match status" value="1"/>
</dbReference>
<dbReference type="InterPro" id="IPR017896">
    <property type="entry name" value="4Fe4S_Fe-S-bd"/>
</dbReference>
<dbReference type="InterPro" id="IPR017900">
    <property type="entry name" value="4Fe4S_Fe_S_CS"/>
</dbReference>
<dbReference type="InterPro" id="IPR024185">
    <property type="entry name" value="FTHF_cligase-like_sf"/>
</dbReference>
<dbReference type="InterPro" id="IPR009051">
    <property type="entry name" value="Helical_ferredxn"/>
</dbReference>
<dbReference type="InterPro" id="IPR003741">
    <property type="entry name" value="LUD_dom"/>
</dbReference>
<dbReference type="InterPro" id="IPR022825">
    <property type="entry name" value="LutB"/>
</dbReference>
<dbReference type="InterPro" id="IPR004452">
    <property type="entry name" value="LutB/LldF"/>
</dbReference>
<dbReference type="InterPro" id="IPR024569">
    <property type="entry name" value="LutB_C"/>
</dbReference>
<dbReference type="InterPro" id="IPR037171">
    <property type="entry name" value="NagB/RpiA_transferase-like"/>
</dbReference>
<dbReference type="NCBIfam" id="TIGR00273">
    <property type="entry name" value="LutB/LldF family L-lactate oxidation iron-sulfur protein"/>
    <property type="match status" value="1"/>
</dbReference>
<dbReference type="PANTHER" id="PTHR47153">
    <property type="entry name" value="LACTATE UTILIZATION PROTEIN B"/>
    <property type="match status" value="1"/>
</dbReference>
<dbReference type="PANTHER" id="PTHR47153:SF2">
    <property type="entry name" value="LACTATE UTILIZATION PROTEIN B"/>
    <property type="match status" value="1"/>
</dbReference>
<dbReference type="Pfam" id="PF13183">
    <property type="entry name" value="Fer4_8"/>
    <property type="match status" value="1"/>
</dbReference>
<dbReference type="Pfam" id="PF02589">
    <property type="entry name" value="LUD_dom"/>
    <property type="match status" value="1"/>
</dbReference>
<dbReference type="Pfam" id="PF11870">
    <property type="entry name" value="LutB_C"/>
    <property type="match status" value="1"/>
</dbReference>
<dbReference type="SUPFAM" id="SSF46548">
    <property type="entry name" value="alpha-helical ferredoxin"/>
    <property type="match status" value="1"/>
</dbReference>
<dbReference type="SUPFAM" id="SSF100950">
    <property type="entry name" value="NagB/RpiA/CoA transferase-like"/>
    <property type="match status" value="1"/>
</dbReference>
<dbReference type="PROSITE" id="PS00198">
    <property type="entry name" value="4FE4S_FER_1"/>
    <property type="match status" value="1"/>
</dbReference>
<evidence type="ECO:0000255" key="1">
    <source>
        <dbReference type="HAMAP-Rule" id="MF_02103"/>
    </source>
</evidence>
<evidence type="ECO:0000305" key="2"/>
<organism>
    <name type="scientific">Bacillus velezensis (strain DSM 23117 / BGSC 10A6 / LMG 26770 / FZB42)</name>
    <name type="common">Bacillus amyloliquefaciens subsp. plantarum</name>
    <dbReference type="NCBI Taxonomy" id="326423"/>
    <lineage>
        <taxon>Bacteria</taxon>
        <taxon>Bacillati</taxon>
        <taxon>Bacillota</taxon>
        <taxon>Bacilli</taxon>
        <taxon>Bacillales</taxon>
        <taxon>Bacillaceae</taxon>
        <taxon>Bacillus</taxon>
        <taxon>Bacillus amyloliquefaciens group</taxon>
    </lineage>
</organism>
<sequence length="476" mass="53132">MAMKIGTAAFKERVSEGIDNEFMRGAVSGAQERLRTRRLQAAEELGNWEDWRSHAEEIRQHVLDNLDFYLEQLAENVANRGGHVFFAETAEEASSYIRDVIRQKNAKKIVKSKSMVTEEINMNEVLEEEGCEVTETDLGEYILQIDDHDPPSHIVAPALHKNKEQIRDVFKERLEYKQTEKPEELVMHARSVLRKKFLEADVGITGCNFAIADTGSVSLVTNEGNGRLVSALPKTQITVMGMERIVPSFSEFEVLVSMLTRSAVGQRLTSYITALTGPRQQGEADGPEEFHLVVVDNGRSRILGTEFQSVLQCIRCAACINVCPVYRHVGGHSYGSIYSGPIGAVLSPLLGGYDEYKELPYASSLCAACTEACPVKIPLHELLLKHRQNIVEKEGKAPISEKLAMKAFGLGSSSPSLYKMGSKWAPAAMTPFTEDDKISKGPGPLKEWTAIRDFPAPHKSRFRDWFKDREKQKGEE</sequence>
<comment type="function">
    <text evidence="1">Is involved in L-lactate degradation and allows cells to grow with lactate as the sole carbon source. Has probably a role as an electron transporter during oxidation of L-lactate.</text>
</comment>
<comment type="similarity">
    <text evidence="1">Belongs to the LutB/YkgF family.</text>
</comment>
<comment type="sequence caution" evidence="2">
    <conflict type="erroneous initiation">
        <sequence resource="EMBL-CDS" id="ABS75477"/>
    </conflict>
</comment>
<reference key="1">
    <citation type="journal article" date="2007" name="Nat. Biotechnol.">
        <title>Comparative analysis of the complete genome sequence of the plant growth-promoting bacterium Bacillus amyloliquefaciens FZB42.</title>
        <authorList>
            <person name="Chen X.H."/>
            <person name="Koumoutsi A."/>
            <person name="Scholz R."/>
            <person name="Eisenreich A."/>
            <person name="Schneider K."/>
            <person name="Heinemeyer I."/>
            <person name="Morgenstern B."/>
            <person name="Voss B."/>
            <person name="Hess W.R."/>
            <person name="Reva O."/>
            <person name="Junge H."/>
            <person name="Voigt B."/>
            <person name="Jungblut P.R."/>
            <person name="Vater J."/>
            <person name="Suessmuth R."/>
            <person name="Liesegang H."/>
            <person name="Strittmatter A."/>
            <person name="Gottschalk G."/>
            <person name="Borriss R."/>
        </authorList>
    </citation>
    <scope>NUCLEOTIDE SEQUENCE [LARGE SCALE GENOMIC DNA]</scope>
    <source>
        <strain>DSM 23117 / BGSC 10A6 / LMG 26770 / FZB42</strain>
    </source>
</reference>
<name>LUTB_BACVZ</name>
<gene>
    <name evidence="1" type="primary">lutB</name>
    <name type="synonym">yvfW</name>
    <name type="ordered locus">RBAM_031460</name>
</gene>
<protein>
    <recommendedName>
        <fullName evidence="1">Lactate utilization protein B</fullName>
    </recommendedName>
</protein>
<proteinExistence type="inferred from homology"/>
<accession>A7Z901</accession>
<keyword id="KW-0004">4Fe-4S</keyword>
<keyword id="KW-0249">Electron transport</keyword>
<keyword id="KW-0408">Iron</keyword>
<keyword id="KW-0411">Iron-sulfur</keyword>
<keyword id="KW-0479">Metal-binding</keyword>
<keyword id="KW-0677">Repeat</keyword>
<keyword id="KW-0813">Transport</keyword>
<feature type="chain" id="PRO_0000383958" description="Lactate utilization protein B">
    <location>
        <begin position="1"/>
        <end position="476"/>
    </location>
</feature>
<feature type="domain" description="4Fe-4S ferredoxin-type 1" evidence="1">
    <location>
        <begin position="304"/>
        <end position="334"/>
    </location>
</feature>
<feature type="domain" description="4Fe-4S ferredoxin-type 2" evidence="1">
    <location>
        <begin position="353"/>
        <end position="382"/>
    </location>
</feature>
<feature type="binding site" evidence="1">
    <location>
        <position position="313"/>
    </location>
    <ligand>
        <name>[4Fe-4S] cluster</name>
        <dbReference type="ChEBI" id="CHEBI:49883"/>
        <label>1</label>
    </ligand>
</feature>
<feature type="binding site" evidence="1">
    <location>
        <position position="316"/>
    </location>
    <ligand>
        <name>[4Fe-4S] cluster</name>
        <dbReference type="ChEBI" id="CHEBI:49883"/>
        <label>1</label>
    </ligand>
</feature>
<feature type="binding site" evidence="1">
    <location>
        <position position="319"/>
    </location>
    <ligand>
        <name>[4Fe-4S] cluster</name>
        <dbReference type="ChEBI" id="CHEBI:49883"/>
        <label>1</label>
    </ligand>
</feature>
<feature type="binding site" evidence="1">
    <location>
        <position position="323"/>
    </location>
    <ligand>
        <name>[4Fe-4S] cluster</name>
        <dbReference type="ChEBI" id="CHEBI:49883"/>
        <label>2</label>
    </ligand>
</feature>
<feature type="binding site" evidence="1">
    <location>
        <position position="366"/>
    </location>
    <ligand>
        <name>[4Fe-4S] cluster</name>
        <dbReference type="ChEBI" id="CHEBI:49883"/>
        <label>2</label>
    </ligand>
</feature>
<feature type="binding site" evidence="1">
    <location>
        <position position="369"/>
    </location>
    <ligand>
        <name>[4Fe-4S] cluster</name>
        <dbReference type="ChEBI" id="CHEBI:49883"/>
        <label>2</label>
    </ligand>
</feature>
<feature type="binding site" evidence="1">
    <location>
        <position position="373"/>
    </location>
    <ligand>
        <name>[4Fe-4S] cluster</name>
        <dbReference type="ChEBI" id="CHEBI:49883"/>
        <label>1</label>
    </ligand>
</feature>